<comment type="function">
    <text evidence="1">Catalyzes the last two sequential reactions in the de novo biosynthetic pathway for UDP-N-acetylglucosamine (UDP-GlcNAc). The C-terminal domain catalyzes the transfer of acetyl group from acetyl coenzyme A to glucosamine-1-phosphate (GlcN-1-P) to produce N-acetylglucosamine-1-phosphate (GlcNAc-1-P), which is converted into UDP-GlcNAc by the transfer of uridine 5-monophosphate (from uridine 5-triphosphate), a reaction catalyzed by the N-terminal domain.</text>
</comment>
<comment type="catalytic activity">
    <reaction evidence="1">
        <text>alpha-D-glucosamine 1-phosphate + acetyl-CoA = N-acetyl-alpha-D-glucosamine 1-phosphate + CoA + H(+)</text>
        <dbReference type="Rhea" id="RHEA:13725"/>
        <dbReference type="ChEBI" id="CHEBI:15378"/>
        <dbReference type="ChEBI" id="CHEBI:57287"/>
        <dbReference type="ChEBI" id="CHEBI:57288"/>
        <dbReference type="ChEBI" id="CHEBI:57776"/>
        <dbReference type="ChEBI" id="CHEBI:58516"/>
        <dbReference type="EC" id="2.3.1.157"/>
    </reaction>
</comment>
<comment type="catalytic activity">
    <reaction evidence="1">
        <text>N-acetyl-alpha-D-glucosamine 1-phosphate + UTP + H(+) = UDP-N-acetyl-alpha-D-glucosamine + diphosphate</text>
        <dbReference type="Rhea" id="RHEA:13509"/>
        <dbReference type="ChEBI" id="CHEBI:15378"/>
        <dbReference type="ChEBI" id="CHEBI:33019"/>
        <dbReference type="ChEBI" id="CHEBI:46398"/>
        <dbReference type="ChEBI" id="CHEBI:57705"/>
        <dbReference type="ChEBI" id="CHEBI:57776"/>
        <dbReference type="EC" id="2.7.7.23"/>
    </reaction>
</comment>
<comment type="cofactor">
    <cofactor evidence="1">
        <name>Mg(2+)</name>
        <dbReference type="ChEBI" id="CHEBI:18420"/>
    </cofactor>
    <text evidence="1">Binds 1 Mg(2+) ion per subunit.</text>
</comment>
<comment type="pathway">
    <text evidence="1">Nucleotide-sugar biosynthesis; UDP-N-acetyl-alpha-D-glucosamine biosynthesis; N-acetyl-alpha-D-glucosamine 1-phosphate from alpha-D-glucosamine 6-phosphate (route II): step 2/2.</text>
</comment>
<comment type="pathway">
    <text evidence="1">Nucleotide-sugar biosynthesis; UDP-N-acetyl-alpha-D-glucosamine biosynthesis; UDP-N-acetyl-alpha-D-glucosamine from N-acetyl-alpha-D-glucosamine 1-phosphate: step 1/1.</text>
</comment>
<comment type="pathway">
    <text evidence="1">Bacterial outer membrane biogenesis; LPS lipid A biosynthesis.</text>
</comment>
<comment type="subunit">
    <text evidence="1">Homotrimer.</text>
</comment>
<comment type="subcellular location">
    <subcellularLocation>
        <location evidence="1">Cytoplasm</location>
    </subcellularLocation>
</comment>
<comment type="similarity">
    <text evidence="1">In the N-terminal section; belongs to the N-acetylglucosamine-1-phosphate uridyltransferase family.</text>
</comment>
<comment type="similarity">
    <text evidence="1">In the C-terminal section; belongs to the transferase hexapeptide repeat family.</text>
</comment>
<dbReference type="EC" id="2.7.7.23" evidence="1"/>
<dbReference type="EC" id="2.3.1.157" evidence="1"/>
<dbReference type="EMBL" id="AP009493">
    <property type="protein sequence ID" value="BAG21213.1"/>
    <property type="molecule type" value="Genomic_DNA"/>
</dbReference>
<dbReference type="RefSeq" id="WP_012380565.1">
    <property type="nucleotide sequence ID" value="NC_010572.1"/>
</dbReference>
<dbReference type="SMR" id="B1VUI7"/>
<dbReference type="KEGG" id="sgr:SGR_4384"/>
<dbReference type="eggNOG" id="COG1207">
    <property type="taxonomic scope" value="Bacteria"/>
</dbReference>
<dbReference type="HOGENOM" id="CLU_029499_15_2_11"/>
<dbReference type="UniPathway" id="UPA00113">
    <property type="reaction ID" value="UER00532"/>
</dbReference>
<dbReference type="UniPathway" id="UPA00113">
    <property type="reaction ID" value="UER00533"/>
</dbReference>
<dbReference type="UniPathway" id="UPA00973"/>
<dbReference type="Proteomes" id="UP000001685">
    <property type="component" value="Chromosome"/>
</dbReference>
<dbReference type="GO" id="GO:0005737">
    <property type="term" value="C:cytoplasm"/>
    <property type="evidence" value="ECO:0007669"/>
    <property type="project" value="UniProtKB-SubCell"/>
</dbReference>
<dbReference type="GO" id="GO:0016020">
    <property type="term" value="C:membrane"/>
    <property type="evidence" value="ECO:0007669"/>
    <property type="project" value="GOC"/>
</dbReference>
<dbReference type="GO" id="GO:0019134">
    <property type="term" value="F:glucosamine-1-phosphate N-acetyltransferase activity"/>
    <property type="evidence" value="ECO:0007669"/>
    <property type="project" value="UniProtKB-UniRule"/>
</dbReference>
<dbReference type="GO" id="GO:0000287">
    <property type="term" value="F:magnesium ion binding"/>
    <property type="evidence" value="ECO:0007669"/>
    <property type="project" value="UniProtKB-UniRule"/>
</dbReference>
<dbReference type="GO" id="GO:0003977">
    <property type="term" value="F:UDP-N-acetylglucosamine diphosphorylase activity"/>
    <property type="evidence" value="ECO:0007669"/>
    <property type="project" value="UniProtKB-UniRule"/>
</dbReference>
<dbReference type="GO" id="GO:0000902">
    <property type="term" value="P:cell morphogenesis"/>
    <property type="evidence" value="ECO:0007669"/>
    <property type="project" value="UniProtKB-UniRule"/>
</dbReference>
<dbReference type="GO" id="GO:0071555">
    <property type="term" value="P:cell wall organization"/>
    <property type="evidence" value="ECO:0007669"/>
    <property type="project" value="UniProtKB-KW"/>
</dbReference>
<dbReference type="GO" id="GO:0009245">
    <property type="term" value="P:lipid A biosynthetic process"/>
    <property type="evidence" value="ECO:0007669"/>
    <property type="project" value="UniProtKB-UniRule"/>
</dbReference>
<dbReference type="GO" id="GO:0009252">
    <property type="term" value="P:peptidoglycan biosynthetic process"/>
    <property type="evidence" value="ECO:0007669"/>
    <property type="project" value="UniProtKB-UniRule"/>
</dbReference>
<dbReference type="GO" id="GO:0008360">
    <property type="term" value="P:regulation of cell shape"/>
    <property type="evidence" value="ECO:0007669"/>
    <property type="project" value="UniProtKB-KW"/>
</dbReference>
<dbReference type="GO" id="GO:0006048">
    <property type="term" value="P:UDP-N-acetylglucosamine biosynthetic process"/>
    <property type="evidence" value="ECO:0007669"/>
    <property type="project" value="UniProtKB-UniPathway"/>
</dbReference>
<dbReference type="CDD" id="cd02540">
    <property type="entry name" value="GT2_GlmU_N_bac"/>
    <property type="match status" value="1"/>
</dbReference>
<dbReference type="CDD" id="cd03353">
    <property type="entry name" value="LbH_GlmU_C"/>
    <property type="match status" value="1"/>
</dbReference>
<dbReference type="Gene3D" id="2.160.10.10">
    <property type="entry name" value="Hexapeptide repeat proteins"/>
    <property type="match status" value="1"/>
</dbReference>
<dbReference type="Gene3D" id="3.90.550.10">
    <property type="entry name" value="Spore Coat Polysaccharide Biosynthesis Protein SpsA, Chain A"/>
    <property type="match status" value="1"/>
</dbReference>
<dbReference type="HAMAP" id="MF_01631">
    <property type="entry name" value="GlmU"/>
    <property type="match status" value="1"/>
</dbReference>
<dbReference type="InterPro" id="IPR005882">
    <property type="entry name" value="Bifunctional_GlmU"/>
</dbReference>
<dbReference type="InterPro" id="IPR050065">
    <property type="entry name" value="GlmU-like"/>
</dbReference>
<dbReference type="InterPro" id="IPR038009">
    <property type="entry name" value="GlmU_C_LbH"/>
</dbReference>
<dbReference type="InterPro" id="IPR001451">
    <property type="entry name" value="Hexapep"/>
</dbReference>
<dbReference type="InterPro" id="IPR025877">
    <property type="entry name" value="MobA-like_NTP_Trfase"/>
</dbReference>
<dbReference type="InterPro" id="IPR029044">
    <property type="entry name" value="Nucleotide-diphossugar_trans"/>
</dbReference>
<dbReference type="InterPro" id="IPR011004">
    <property type="entry name" value="Trimer_LpxA-like_sf"/>
</dbReference>
<dbReference type="NCBIfam" id="TIGR01173">
    <property type="entry name" value="glmU"/>
    <property type="match status" value="1"/>
</dbReference>
<dbReference type="NCBIfam" id="NF010932">
    <property type="entry name" value="PRK14352.1"/>
    <property type="match status" value="1"/>
</dbReference>
<dbReference type="PANTHER" id="PTHR43584:SF3">
    <property type="entry name" value="BIFUNCTIONAL PROTEIN GLMU"/>
    <property type="match status" value="1"/>
</dbReference>
<dbReference type="PANTHER" id="PTHR43584">
    <property type="entry name" value="NUCLEOTIDYL TRANSFERASE"/>
    <property type="match status" value="1"/>
</dbReference>
<dbReference type="Pfam" id="PF00132">
    <property type="entry name" value="Hexapep"/>
    <property type="match status" value="1"/>
</dbReference>
<dbReference type="Pfam" id="PF12804">
    <property type="entry name" value="NTP_transf_3"/>
    <property type="match status" value="1"/>
</dbReference>
<dbReference type="SUPFAM" id="SSF53448">
    <property type="entry name" value="Nucleotide-diphospho-sugar transferases"/>
    <property type="match status" value="1"/>
</dbReference>
<dbReference type="SUPFAM" id="SSF51161">
    <property type="entry name" value="Trimeric LpxA-like enzymes"/>
    <property type="match status" value="1"/>
</dbReference>
<proteinExistence type="inferred from homology"/>
<organism>
    <name type="scientific">Streptomyces griseus subsp. griseus (strain JCM 4626 / CBS 651.72 / NBRC 13350 / KCC S-0626 / ISP 5235)</name>
    <dbReference type="NCBI Taxonomy" id="455632"/>
    <lineage>
        <taxon>Bacteria</taxon>
        <taxon>Bacillati</taxon>
        <taxon>Actinomycetota</taxon>
        <taxon>Actinomycetes</taxon>
        <taxon>Kitasatosporales</taxon>
        <taxon>Streptomycetaceae</taxon>
        <taxon>Streptomyces</taxon>
    </lineage>
</organism>
<accession>B1VUI7</accession>
<evidence type="ECO:0000255" key="1">
    <source>
        <dbReference type="HAMAP-Rule" id="MF_01631"/>
    </source>
</evidence>
<evidence type="ECO:0000256" key="2">
    <source>
        <dbReference type="SAM" id="MobiDB-lite"/>
    </source>
</evidence>
<feature type="chain" id="PRO_1000186493" description="Bifunctional protein GlmU">
    <location>
        <begin position="1"/>
        <end position="482"/>
    </location>
</feature>
<feature type="region of interest" description="Pyrophosphorylase" evidence="1">
    <location>
        <begin position="1"/>
        <end position="238"/>
    </location>
</feature>
<feature type="region of interest" description="Linker" evidence="1">
    <location>
        <begin position="239"/>
        <end position="259"/>
    </location>
</feature>
<feature type="region of interest" description="N-acetyltransferase" evidence="1">
    <location>
        <begin position="260"/>
        <end position="482"/>
    </location>
</feature>
<feature type="region of interest" description="Disordered" evidence="2">
    <location>
        <begin position="458"/>
        <end position="482"/>
    </location>
</feature>
<feature type="compositionally biased region" description="Low complexity" evidence="2">
    <location>
        <begin position="465"/>
        <end position="476"/>
    </location>
</feature>
<feature type="active site" description="Proton acceptor" evidence="1">
    <location>
        <position position="371"/>
    </location>
</feature>
<feature type="binding site" evidence="1">
    <location>
        <begin position="12"/>
        <end position="15"/>
    </location>
    <ligand>
        <name>UDP-N-acetyl-alpha-D-glucosamine</name>
        <dbReference type="ChEBI" id="CHEBI:57705"/>
    </ligand>
</feature>
<feature type="binding site" evidence="1">
    <location>
        <position position="26"/>
    </location>
    <ligand>
        <name>UDP-N-acetyl-alpha-D-glucosamine</name>
        <dbReference type="ChEBI" id="CHEBI:57705"/>
    </ligand>
</feature>
<feature type="binding site" evidence="1">
    <location>
        <position position="79"/>
    </location>
    <ligand>
        <name>UDP-N-acetyl-alpha-D-glucosamine</name>
        <dbReference type="ChEBI" id="CHEBI:57705"/>
    </ligand>
</feature>
<feature type="binding site" evidence="1">
    <location>
        <begin position="84"/>
        <end position="85"/>
    </location>
    <ligand>
        <name>UDP-N-acetyl-alpha-D-glucosamine</name>
        <dbReference type="ChEBI" id="CHEBI:57705"/>
    </ligand>
</feature>
<feature type="binding site" evidence="1">
    <location>
        <position position="110"/>
    </location>
    <ligand>
        <name>Mg(2+)</name>
        <dbReference type="ChEBI" id="CHEBI:18420"/>
    </ligand>
</feature>
<feature type="binding site" evidence="1">
    <location>
        <position position="147"/>
    </location>
    <ligand>
        <name>UDP-N-acetyl-alpha-D-glucosamine</name>
        <dbReference type="ChEBI" id="CHEBI:57705"/>
    </ligand>
</feature>
<feature type="binding site" evidence="1">
    <location>
        <position position="163"/>
    </location>
    <ligand>
        <name>UDP-N-acetyl-alpha-D-glucosamine</name>
        <dbReference type="ChEBI" id="CHEBI:57705"/>
    </ligand>
</feature>
<feature type="binding site" evidence="1">
    <location>
        <position position="178"/>
    </location>
    <ligand>
        <name>UDP-N-acetyl-alpha-D-glucosamine</name>
        <dbReference type="ChEBI" id="CHEBI:57705"/>
    </ligand>
</feature>
<feature type="binding site" evidence="1">
    <location>
        <position position="236"/>
    </location>
    <ligand>
        <name>Mg(2+)</name>
        <dbReference type="ChEBI" id="CHEBI:18420"/>
    </ligand>
</feature>
<feature type="binding site" evidence="1">
    <location>
        <position position="236"/>
    </location>
    <ligand>
        <name>UDP-N-acetyl-alpha-D-glucosamine</name>
        <dbReference type="ChEBI" id="CHEBI:57705"/>
    </ligand>
</feature>
<feature type="binding site" evidence="1">
    <location>
        <position position="341"/>
    </location>
    <ligand>
        <name>UDP-N-acetyl-alpha-D-glucosamine</name>
        <dbReference type="ChEBI" id="CHEBI:57705"/>
    </ligand>
</feature>
<feature type="binding site" evidence="1">
    <location>
        <position position="359"/>
    </location>
    <ligand>
        <name>UDP-N-acetyl-alpha-D-glucosamine</name>
        <dbReference type="ChEBI" id="CHEBI:57705"/>
    </ligand>
</feature>
<feature type="binding site" evidence="1">
    <location>
        <position position="374"/>
    </location>
    <ligand>
        <name>UDP-N-acetyl-alpha-D-glucosamine</name>
        <dbReference type="ChEBI" id="CHEBI:57705"/>
    </ligand>
</feature>
<feature type="binding site" evidence="1">
    <location>
        <position position="385"/>
    </location>
    <ligand>
        <name>UDP-N-acetyl-alpha-D-glucosamine</name>
        <dbReference type="ChEBI" id="CHEBI:57705"/>
    </ligand>
</feature>
<feature type="binding site" evidence="1">
    <location>
        <position position="388"/>
    </location>
    <ligand>
        <name>acetyl-CoA</name>
        <dbReference type="ChEBI" id="CHEBI:57288"/>
    </ligand>
</feature>
<feature type="binding site" evidence="1">
    <location>
        <begin position="394"/>
        <end position="395"/>
    </location>
    <ligand>
        <name>acetyl-CoA</name>
        <dbReference type="ChEBI" id="CHEBI:57288"/>
    </ligand>
</feature>
<feature type="binding site" evidence="1">
    <location>
        <position position="413"/>
    </location>
    <ligand>
        <name>acetyl-CoA</name>
        <dbReference type="ChEBI" id="CHEBI:57288"/>
    </ligand>
</feature>
<feature type="binding site" evidence="1">
    <location>
        <position position="431"/>
    </location>
    <ligand>
        <name>acetyl-CoA</name>
        <dbReference type="ChEBI" id="CHEBI:57288"/>
    </ligand>
</feature>
<feature type="binding site" evidence="1">
    <location>
        <position position="448"/>
    </location>
    <ligand>
        <name>acetyl-CoA</name>
        <dbReference type="ChEBI" id="CHEBI:57288"/>
    </ligand>
</feature>
<keyword id="KW-0012">Acyltransferase</keyword>
<keyword id="KW-0133">Cell shape</keyword>
<keyword id="KW-0961">Cell wall biogenesis/degradation</keyword>
<keyword id="KW-0963">Cytoplasm</keyword>
<keyword id="KW-0460">Magnesium</keyword>
<keyword id="KW-0479">Metal-binding</keyword>
<keyword id="KW-0511">Multifunctional enzyme</keyword>
<keyword id="KW-0548">Nucleotidyltransferase</keyword>
<keyword id="KW-0573">Peptidoglycan synthesis</keyword>
<keyword id="KW-0677">Repeat</keyword>
<keyword id="KW-0808">Transferase</keyword>
<name>GLMU_STRGG</name>
<sequence>MSATSPAAVVVLAAGEGTRMKSKTPKVLHEISGRSLVGHVVAAARELDPQHLVVVVGHAREQVTAHLDAGDAPVRTAFQAEQNGTGHAVRMGLEELGGAVEGTVIVVCGDTPLLSGTTLGALAATHAADANAVTVLSAEVPDSTGYGRIVRDPATGAVTEIVEHKDATDEQRAIREINSGVFAFDGRLLGDALGKVRTDNSQGEEYLTDVLSILREAGHRVGACVAGDHREILGINNRLQLAEARRLLNERLLERAMLAGVTVVDPASTLIDATVTYERDAVVHPGTQLLGTTHLAEDSEVGPNARIENTAVGAGARVDNSVTLSAEIGAGALVGPYAYLRPGTRLGTKAKAGTYVEMKNATIGEGTKVPHLSYVGDATIGDHTNIGAASVFVNYDGVAKHHTTIGSHCRTGSDNMFVAPVTVGDGVYTAAGSVITKDVPAGSLAVARGQQRNIEGWVARKRPGSAAAQAAQASSQETDGQS</sequence>
<reference key="1">
    <citation type="journal article" date="2008" name="J. Bacteriol.">
        <title>Genome sequence of the streptomycin-producing microorganism Streptomyces griseus IFO 13350.</title>
        <authorList>
            <person name="Ohnishi Y."/>
            <person name="Ishikawa J."/>
            <person name="Hara H."/>
            <person name="Suzuki H."/>
            <person name="Ikenoya M."/>
            <person name="Ikeda H."/>
            <person name="Yamashita A."/>
            <person name="Hattori M."/>
            <person name="Horinouchi S."/>
        </authorList>
    </citation>
    <scope>NUCLEOTIDE SEQUENCE [LARGE SCALE GENOMIC DNA]</scope>
    <source>
        <strain>JCM 4626 / CBS 651.72 / NBRC 13350 / KCC S-0626 / ISP 5235</strain>
    </source>
</reference>
<gene>
    <name evidence="1" type="primary">glmU</name>
    <name type="ordered locus">SGR_4384</name>
</gene>
<protein>
    <recommendedName>
        <fullName evidence="1">Bifunctional protein GlmU</fullName>
    </recommendedName>
    <domain>
        <recommendedName>
            <fullName evidence="1">UDP-N-acetylglucosamine pyrophosphorylase</fullName>
            <ecNumber evidence="1">2.7.7.23</ecNumber>
        </recommendedName>
        <alternativeName>
            <fullName evidence="1">N-acetylglucosamine-1-phosphate uridyltransferase</fullName>
        </alternativeName>
    </domain>
    <domain>
        <recommendedName>
            <fullName evidence="1">Glucosamine-1-phosphate N-acetyltransferase</fullName>
            <ecNumber evidence="1">2.3.1.157</ecNumber>
        </recommendedName>
    </domain>
</protein>